<feature type="chain" id="PRO_1000212771" description="Large ribosomal subunit protein uL11">
    <location>
        <begin position="1"/>
        <end position="142"/>
    </location>
</feature>
<dbReference type="EMBL" id="CP001396">
    <property type="protein sequence ID" value="ACR61848.1"/>
    <property type="molecule type" value="Genomic_DNA"/>
</dbReference>
<dbReference type="RefSeq" id="WP_001085926.1">
    <property type="nucleotide sequence ID" value="NC_012759.1"/>
</dbReference>
<dbReference type="SMR" id="C5A0S3"/>
<dbReference type="GeneID" id="93777911"/>
<dbReference type="KEGG" id="ebw:BWG_3642"/>
<dbReference type="HOGENOM" id="CLU_074237_2_0_6"/>
<dbReference type="GO" id="GO:0022625">
    <property type="term" value="C:cytosolic large ribosomal subunit"/>
    <property type="evidence" value="ECO:0007669"/>
    <property type="project" value="TreeGrafter"/>
</dbReference>
<dbReference type="GO" id="GO:0070180">
    <property type="term" value="F:large ribosomal subunit rRNA binding"/>
    <property type="evidence" value="ECO:0007669"/>
    <property type="project" value="UniProtKB-UniRule"/>
</dbReference>
<dbReference type="GO" id="GO:0003735">
    <property type="term" value="F:structural constituent of ribosome"/>
    <property type="evidence" value="ECO:0007669"/>
    <property type="project" value="InterPro"/>
</dbReference>
<dbReference type="GO" id="GO:0006412">
    <property type="term" value="P:translation"/>
    <property type="evidence" value="ECO:0007669"/>
    <property type="project" value="UniProtKB-UniRule"/>
</dbReference>
<dbReference type="CDD" id="cd00349">
    <property type="entry name" value="Ribosomal_L11"/>
    <property type="match status" value="1"/>
</dbReference>
<dbReference type="FunFam" id="1.10.10.250:FF:000001">
    <property type="entry name" value="50S ribosomal protein L11"/>
    <property type="match status" value="1"/>
</dbReference>
<dbReference type="FunFam" id="3.30.1550.10:FF:000001">
    <property type="entry name" value="50S ribosomal protein L11"/>
    <property type="match status" value="1"/>
</dbReference>
<dbReference type="Gene3D" id="1.10.10.250">
    <property type="entry name" value="Ribosomal protein L11, C-terminal domain"/>
    <property type="match status" value="1"/>
</dbReference>
<dbReference type="Gene3D" id="3.30.1550.10">
    <property type="entry name" value="Ribosomal protein L11/L12, N-terminal domain"/>
    <property type="match status" value="1"/>
</dbReference>
<dbReference type="HAMAP" id="MF_00736">
    <property type="entry name" value="Ribosomal_uL11"/>
    <property type="match status" value="1"/>
</dbReference>
<dbReference type="InterPro" id="IPR000911">
    <property type="entry name" value="Ribosomal_uL11"/>
</dbReference>
<dbReference type="InterPro" id="IPR006519">
    <property type="entry name" value="Ribosomal_uL11_bac-typ"/>
</dbReference>
<dbReference type="InterPro" id="IPR020783">
    <property type="entry name" value="Ribosomal_uL11_C"/>
</dbReference>
<dbReference type="InterPro" id="IPR036769">
    <property type="entry name" value="Ribosomal_uL11_C_sf"/>
</dbReference>
<dbReference type="InterPro" id="IPR020785">
    <property type="entry name" value="Ribosomal_uL11_CS"/>
</dbReference>
<dbReference type="InterPro" id="IPR020784">
    <property type="entry name" value="Ribosomal_uL11_N"/>
</dbReference>
<dbReference type="InterPro" id="IPR036796">
    <property type="entry name" value="Ribosomal_uL11_N_sf"/>
</dbReference>
<dbReference type="NCBIfam" id="TIGR01632">
    <property type="entry name" value="L11_bact"/>
    <property type="match status" value="1"/>
</dbReference>
<dbReference type="PANTHER" id="PTHR11661">
    <property type="entry name" value="60S RIBOSOMAL PROTEIN L12"/>
    <property type="match status" value="1"/>
</dbReference>
<dbReference type="PANTHER" id="PTHR11661:SF1">
    <property type="entry name" value="LARGE RIBOSOMAL SUBUNIT PROTEIN UL11M"/>
    <property type="match status" value="1"/>
</dbReference>
<dbReference type="Pfam" id="PF00298">
    <property type="entry name" value="Ribosomal_L11"/>
    <property type="match status" value="1"/>
</dbReference>
<dbReference type="Pfam" id="PF03946">
    <property type="entry name" value="Ribosomal_L11_N"/>
    <property type="match status" value="1"/>
</dbReference>
<dbReference type="SMART" id="SM00649">
    <property type="entry name" value="RL11"/>
    <property type="match status" value="1"/>
</dbReference>
<dbReference type="SUPFAM" id="SSF54747">
    <property type="entry name" value="Ribosomal L11/L12e N-terminal domain"/>
    <property type="match status" value="1"/>
</dbReference>
<dbReference type="SUPFAM" id="SSF46906">
    <property type="entry name" value="Ribosomal protein L11, C-terminal domain"/>
    <property type="match status" value="1"/>
</dbReference>
<dbReference type="PROSITE" id="PS00359">
    <property type="entry name" value="RIBOSOMAL_L11"/>
    <property type="match status" value="1"/>
</dbReference>
<name>RL11_ECOBW</name>
<gene>
    <name evidence="1" type="primary">rplK</name>
    <name type="ordered locus">BWG_3642</name>
</gene>
<organism>
    <name type="scientific">Escherichia coli (strain K12 / MC4100 / BW2952)</name>
    <dbReference type="NCBI Taxonomy" id="595496"/>
    <lineage>
        <taxon>Bacteria</taxon>
        <taxon>Pseudomonadati</taxon>
        <taxon>Pseudomonadota</taxon>
        <taxon>Gammaproteobacteria</taxon>
        <taxon>Enterobacterales</taxon>
        <taxon>Enterobacteriaceae</taxon>
        <taxon>Escherichia</taxon>
    </lineage>
</organism>
<reference key="1">
    <citation type="journal article" date="2009" name="J. Bacteriol.">
        <title>Genomic sequencing reveals regulatory mutations and recombinational events in the widely used MC4100 lineage of Escherichia coli K-12.</title>
        <authorList>
            <person name="Ferenci T."/>
            <person name="Zhou Z."/>
            <person name="Betteridge T."/>
            <person name="Ren Y."/>
            <person name="Liu Y."/>
            <person name="Feng L."/>
            <person name="Reeves P.R."/>
            <person name="Wang L."/>
        </authorList>
    </citation>
    <scope>NUCLEOTIDE SEQUENCE [LARGE SCALE GENOMIC DNA]</scope>
    <source>
        <strain>K12 / MC4100 / BW2952</strain>
    </source>
</reference>
<evidence type="ECO:0000255" key="1">
    <source>
        <dbReference type="HAMAP-Rule" id="MF_00736"/>
    </source>
</evidence>
<evidence type="ECO:0000305" key="2"/>
<sequence>MAKKVQAYVKLQVAAGMANPSPPVGPALGQQGVNIMEFCKAFNAKTDSIEKGLPIPVVITVYADRSFTFVTKTPPAAVLLKKAAGIKSGSGKPNKDKVGKISRAQLQEIAQTKAADMTGADIEAMTRSIEGTARSMGLVVED</sequence>
<comment type="function">
    <text evidence="1">Forms part of the ribosomal stalk which helps the ribosome interact with GTP-bound translation factors.</text>
</comment>
<comment type="subunit">
    <text evidence="1">Part of the ribosomal stalk of the 50S ribosomal subunit. Interacts with L10 and the large rRNA to form the base of the stalk. L10 forms an elongated spine to which L12 dimers bind in a sequential fashion forming a multimeric L10(L12)X complex.</text>
</comment>
<comment type="PTM">
    <text evidence="1">One or more lysine residues are methylated.</text>
</comment>
<comment type="similarity">
    <text evidence="1">Belongs to the universal ribosomal protein uL11 family.</text>
</comment>
<protein>
    <recommendedName>
        <fullName evidence="1">Large ribosomal subunit protein uL11</fullName>
    </recommendedName>
    <alternativeName>
        <fullName evidence="2">50S ribosomal protein L11</fullName>
    </alternativeName>
</protein>
<keyword id="KW-0488">Methylation</keyword>
<keyword id="KW-0687">Ribonucleoprotein</keyword>
<keyword id="KW-0689">Ribosomal protein</keyword>
<keyword id="KW-0694">RNA-binding</keyword>
<keyword id="KW-0699">rRNA-binding</keyword>
<proteinExistence type="inferred from homology"/>
<accession>C5A0S3</accession>